<reference key="1">
    <citation type="journal article" date="1995" name="Science">
        <title>Whole-genome random sequencing and assembly of Haemophilus influenzae Rd.</title>
        <authorList>
            <person name="Fleischmann R.D."/>
            <person name="Adams M.D."/>
            <person name="White O."/>
            <person name="Clayton R.A."/>
            <person name="Kirkness E.F."/>
            <person name="Kerlavage A.R."/>
            <person name="Bult C.J."/>
            <person name="Tomb J.-F."/>
            <person name="Dougherty B.A."/>
            <person name="Merrick J.M."/>
            <person name="McKenney K."/>
            <person name="Sutton G.G."/>
            <person name="FitzHugh W."/>
            <person name="Fields C.A."/>
            <person name="Gocayne J.D."/>
            <person name="Scott J.D."/>
            <person name="Shirley R."/>
            <person name="Liu L.-I."/>
            <person name="Glodek A."/>
            <person name="Kelley J.M."/>
            <person name="Weidman J.F."/>
            <person name="Phillips C.A."/>
            <person name="Spriggs T."/>
            <person name="Hedblom E."/>
            <person name="Cotton M.D."/>
            <person name="Utterback T.R."/>
            <person name="Hanna M.C."/>
            <person name="Nguyen D.T."/>
            <person name="Saudek D.M."/>
            <person name="Brandon R.C."/>
            <person name="Fine L.D."/>
            <person name="Fritchman J.L."/>
            <person name="Fuhrmann J.L."/>
            <person name="Geoghagen N.S.M."/>
            <person name="Gnehm C.L."/>
            <person name="McDonald L.A."/>
            <person name="Small K.V."/>
            <person name="Fraser C.M."/>
            <person name="Smith H.O."/>
            <person name="Venter J.C."/>
        </authorList>
    </citation>
    <scope>NUCLEOTIDE SEQUENCE [LARGE SCALE GENOMIC DNA]</scope>
    <source>
        <strain>ATCC 51907 / DSM 11121 / KW20 / Rd</strain>
    </source>
</reference>
<dbReference type="EMBL" id="L42023">
    <property type="protein sequence ID" value="AAC22959.1"/>
    <property type="molecule type" value="Genomic_DNA"/>
</dbReference>
<dbReference type="PIR" id="A64116">
    <property type="entry name" value="A64116"/>
</dbReference>
<dbReference type="RefSeq" id="NP_439464.1">
    <property type="nucleotide sequence ID" value="NC_000907.1"/>
</dbReference>
<dbReference type="SMR" id="P43723"/>
<dbReference type="STRING" id="71421.HI_1313"/>
<dbReference type="EnsemblBacteria" id="AAC22959">
    <property type="protein sequence ID" value="AAC22959"/>
    <property type="gene ID" value="HI_1313"/>
</dbReference>
<dbReference type="KEGG" id="hin:HI_1313"/>
<dbReference type="PATRIC" id="fig|71421.8.peg.1365"/>
<dbReference type="eggNOG" id="COG0776">
    <property type="taxonomic scope" value="Bacteria"/>
</dbReference>
<dbReference type="HOGENOM" id="CLU_105066_1_3_6"/>
<dbReference type="OrthoDB" id="9797747at2"/>
<dbReference type="PhylomeDB" id="P43723"/>
<dbReference type="BioCyc" id="HINF71421:G1GJ1-1338-MONOMER"/>
<dbReference type="Proteomes" id="UP000000579">
    <property type="component" value="Chromosome"/>
</dbReference>
<dbReference type="GO" id="GO:0005829">
    <property type="term" value="C:cytosol"/>
    <property type="evidence" value="ECO:0000318"/>
    <property type="project" value="GO_Central"/>
</dbReference>
<dbReference type="GO" id="GO:0003677">
    <property type="term" value="F:DNA binding"/>
    <property type="evidence" value="ECO:0000318"/>
    <property type="project" value="GO_Central"/>
</dbReference>
<dbReference type="GO" id="GO:0030527">
    <property type="term" value="F:structural constituent of chromatin"/>
    <property type="evidence" value="ECO:0007669"/>
    <property type="project" value="InterPro"/>
</dbReference>
<dbReference type="GO" id="GO:0006310">
    <property type="term" value="P:DNA recombination"/>
    <property type="evidence" value="ECO:0007669"/>
    <property type="project" value="UniProtKB-UniRule"/>
</dbReference>
<dbReference type="GO" id="GO:0009893">
    <property type="term" value="P:positive regulation of metabolic process"/>
    <property type="evidence" value="ECO:0007669"/>
    <property type="project" value="UniProtKB-ARBA"/>
</dbReference>
<dbReference type="GO" id="GO:0006355">
    <property type="term" value="P:regulation of DNA-templated transcription"/>
    <property type="evidence" value="ECO:0007669"/>
    <property type="project" value="UniProtKB-UniRule"/>
</dbReference>
<dbReference type="GO" id="GO:0006417">
    <property type="term" value="P:regulation of translation"/>
    <property type="evidence" value="ECO:0007669"/>
    <property type="project" value="UniProtKB-UniRule"/>
</dbReference>
<dbReference type="CDD" id="cd13835">
    <property type="entry name" value="IHF_A"/>
    <property type="match status" value="1"/>
</dbReference>
<dbReference type="FunFam" id="4.10.520.10:FF:000002">
    <property type="entry name" value="Integration host factor subunit alpha"/>
    <property type="match status" value="1"/>
</dbReference>
<dbReference type="Gene3D" id="4.10.520.10">
    <property type="entry name" value="IHF-like DNA-binding proteins"/>
    <property type="match status" value="1"/>
</dbReference>
<dbReference type="HAMAP" id="MF_00380">
    <property type="entry name" value="IHF_alpha"/>
    <property type="match status" value="1"/>
</dbReference>
<dbReference type="InterPro" id="IPR000119">
    <property type="entry name" value="Hist_DNA-bd"/>
</dbReference>
<dbReference type="InterPro" id="IPR020816">
    <property type="entry name" value="Histone-like_DNA-bd_CS"/>
</dbReference>
<dbReference type="InterPro" id="IPR010992">
    <property type="entry name" value="IHF-like_DNA-bd_dom_sf"/>
</dbReference>
<dbReference type="InterPro" id="IPR005684">
    <property type="entry name" value="IHF_alpha"/>
</dbReference>
<dbReference type="NCBIfam" id="TIGR00987">
    <property type="entry name" value="himA"/>
    <property type="match status" value="1"/>
</dbReference>
<dbReference type="NCBIfam" id="NF001401">
    <property type="entry name" value="PRK00285.1"/>
    <property type="match status" value="1"/>
</dbReference>
<dbReference type="PANTHER" id="PTHR33175">
    <property type="entry name" value="DNA-BINDING PROTEIN HU"/>
    <property type="match status" value="1"/>
</dbReference>
<dbReference type="PANTHER" id="PTHR33175:SF2">
    <property type="entry name" value="INTEGRATION HOST FACTOR SUBUNIT ALPHA"/>
    <property type="match status" value="1"/>
</dbReference>
<dbReference type="Pfam" id="PF00216">
    <property type="entry name" value="Bac_DNA_binding"/>
    <property type="match status" value="1"/>
</dbReference>
<dbReference type="PRINTS" id="PR01727">
    <property type="entry name" value="DNABINDINGHU"/>
</dbReference>
<dbReference type="SMART" id="SM00411">
    <property type="entry name" value="BHL"/>
    <property type="match status" value="1"/>
</dbReference>
<dbReference type="SUPFAM" id="SSF47729">
    <property type="entry name" value="IHF-like DNA-binding proteins"/>
    <property type="match status" value="1"/>
</dbReference>
<dbReference type="PROSITE" id="PS00045">
    <property type="entry name" value="HISTONE_LIKE"/>
    <property type="match status" value="1"/>
</dbReference>
<organism>
    <name type="scientific">Haemophilus influenzae (strain ATCC 51907 / DSM 11121 / KW20 / Rd)</name>
    <dbReference type="NCBI Taxonomy" id="71421"/>
    <lineage>
        <taxon>Bacteria</taxon>
        <taxon>Pseudomonadati</taxon>
        <taxon>Pseudomonadota</taxon>
        <taxon>Gammaproteobacteria</taxon>
        <taxon>Pasteurellales</taxon>
        <taxon>Pasteurellaceae</taxon>
        <taxon>Haemophilus</taxon>
    </lineage>
</organism>
<sequence>MATITKLDIIEYLSDKYHLSKQDTKNVVENFLEEIRLSLESGQDVKLSGFGNFELRDKSSRPGRNPKTGDVVPVSARRVVTFKPGQKLRARVEKTK</sequence>
<comment type="function">
    <text evidence="1">This protein is one of the two subunits of integration host factor, a specific DNA-binding protein that functions in genetic recombination as well as in transcriptional and translational control.</text>
</comment>
<comment type="subunit">
    <text evidence="1">Heterodimer of an alpha and a beta chain.</text>
</comment>
<comment type="similarity">
    <text evidence="2">Belongs to the bacterial histone-like protein family.</text>
</comment>
<keyword id="KW-0233">DNA recombination</keyword>
<keyword id="KW-0238">DNA-binding</keyword>
<keyword id="KW-1185">Reference proteome</keyword>
<keyword id="KW-0804">Transcription</keyword>
<keyword id="KW-0805">Transcription regulation</keyword>
<keyword id="KW-0810">Translation regulation</keyword>
<evidence type="ECO:0000250" key="1"/>
<evidence type="ECO:0000305" key="2"/>
<name>IHFA_HAEIN</name>
<gene>
    <name type="primary">ihfA</name>
    <name type="synonym">himA</name>
    <name type="ordered locus">HI_1313</name>
</gene>
<proteinExistence type="inferred from homology"/>
<accession>P43723</accession>
<feature type="chain" id="PRO_0000105010" description="Integration host factor subunit alpha">
    <location>
        <begin position="1"/>
        <end position="96"/>
    </location>
</feature>
<protein>
    <recommendedName>
        <fullName>Integration host factor subunit alpha</fullName>
        <shortName>IHF-alpha</shortName>
    </recommendedName>
</protein>